<gene>
    <name evidence="1" type="primary">lplA</name>
    <name type="ordered locus">EcSMS35_4935</name>
</gene>
<evidence type="ECO:0000255" key="1">
    <source>
        <dbReference type="HAMAP-Rule" id="MF_01602"/>
    </source>
</evidence>
<evidence type="ECO:0000255" key="2">
    <source>
        <dbReference type="PROSITE-ProRule" id="PRU01067"/>
    </source>
</evidence>
<comment type="function">
    <text evidence="1">Catalyzes both the ATP-dependent activation of exogenously supplied lipoate to lipoyl-AMP and the transfer of the activated lipoyl onto the lipoyl domains of lipoate-dependent enzymes.</text>
</comment>
<comment type="catalytic activity">
    <reaction evidence="1">
        <text>L-lysyl-[lipoyl-carrier protein] + (R)-lipoate + ATP = N(6)-[(R)-lipoyl]-L-lysyl-[lipoyl-carrier protein] + AMP + diphosphate + H(+)</text>
        <dbReference type="Rhea" id="RHEA:49288"/>
        <dbReference type="Rhea" id="RHEA-COMP:10500"/>
        <dbReference type="Rhea" id="RHEA-COMP:10502"/>
        <dbReference type="ChEBI" id="CHEBI:15378"/>
        <dbReference type="ChEBI" id="CHEBI:29969"/>
        <dbReference type="ChEBI" id="CHEBI:30616"/>
        <dbReference type="ChEBI" id="CHEBI:33019"/>
        <dbReference type="ChEBI" id="CHEBI:83088"/>
        <dbReference type="ChEBI" id="CHEBI:83099"/>
        <dbReference type="ChEBI" id="CHEBI:456215"/>
        <dbReference type="EC" id="6.3.1.20"/>
    </reaction>
</comment>
<comment type="pathway">
    <text evidence="1">Protein modification; protein lipoylation via exogenous pathway; protein N(6)-(lipoyl)lysine from lipoate: step 1/2.</text>
</comment>
<comment type="pathway">
    <text evidence="1">Protein modification; protein lipoylation via exogenous pathway; protein N(6)-(lipoyl)lysine from lipoate: step 2/2.</text>
</comment>
<comment type="subunit">
    <text evidence="1">Monomer.</text>
</comment>
<comment type="subcellular location">
    <subcellularLocation>
        <location evidence="1">Cytoplasm</location>
    </subcellularLocation>
</comment>
<comment type="miscellaneous">
    <text evidence="1">In the transfer reaction, the free carboxyl group of lipoic acid is attached via an amide linkage to the epsilon-amino group of a specific lysine residue of lipoyl domains of lipoate-dependent enzymes.</text>
</comment>
<comment type="similarity">
    <text evidence="1">Belongs to the LplA family.</text>
</comment>
<sequence length="338" mass="37911">MSTLRLLISDSYDPWFNLAVEECIFRQMPATQRVLFLWRNADTVVIGRAQNPWKECNTRRMEEDNVRLARRSSGGGAVFHDLGNTCFTFMAGKPEYDKTISTSIVLNALNALGVSAEASGRNDLVVKTAEGDRKVSGSAYRETKDRGFHHGTLLLNADLSRLANYLNPDKKKLAAKGITSVRSRVTNLTELLPGITHEQVCEAITEAFFAHYGERVEAEIISPDKTPDLPNFAETFARQSSWEWNFGQAPAFSHLLDERFTWGGVELHFDVEKGHITRAQVFTDSLNPAPLEALAGRLQGCLYRADMLQQECEALLVDFPEQEKELRELSTWIAGAVR</sequence>
<protein>
    <recommendedName>
        <fullName evidence="1">Lipoate-protein ligase A</fullName>
        <ecNumber evidence="1">6.3.1.20</ecNumber>
    </recommendedName>
    <alternativeName>
        <fullName evidence="1">Lipoate--protein ligase</fullName>
    </alternativeName>
</protein>
<feature type="chain" id="PRO_1000148107" description="Lipoate-protein ligase A">
    <location>
        <begin position="1"/>
        <end position="338"/>
    </location>
</feature>
<feature type="domain" description="BPL/LPL catalytic" evidence="2">
    <location>
        <begin position="29"/>
        <end position="216"/>
    </location>
</feature>
<feature type="binding site" evidence="1">
    <location>
        <position position="71"/>
    </location>
    <ligand>
        <name>ATP</name>
        <dbReference type="ChEBI" id="CHEBI:30616"/>
    </ligand>
</feature>
<feature type="binding site" evidence="1">
    <location>
        <begin position="76"/>
        <end position="79"/>
    </location>
    <ligand>
        <name>ATP</name>
        <dbReference type="ChEBI" id="CHEBI:30616"/>
    </ligand>
</feature>
<feature type="binding site" evidence="1">
    <location>
        <position position="134"/>
    </location>
    <ligand>
        <name>(R)-lipoate</name>
        <dbReference type="ChEBI" id="CHEBI:83088"/>
    </ligand>
</feature>
<feature type="binding site" evidence="1">
    <location>
        <position position="134"/>
    </location>
    <ligand>
        <name>ATP</name>
        <dbReference type="ChEBI" id="CHEBI:30616"/>
    </ligand>
</feature>
<reference key="1">
    <citation type="journal article" date="2008" name="J. Bacteriol.">
        <title>Insights into the environmental resistance gene pool from the genome sequence of the multidrug-resistant environmental isolate Escherichia coli SMS-3-5.</title>
        <authorList>
            <person name="Fricke W.F."/>
            <person name="Wright M.S."/>
            <person name="Lindell A.H."/>
            <person name="Harkins D.M."/>
            <person name="Baker-Austin C."/>
            <person name="Ravel J."/>
            <person name="Stepanauskas R."/>
        </authorList>
    </citation>
    <scope>NUCLEOTIDE SEQUENCE [LARGE SCALE GENOMIC DNA]</scope>
    <source>
        <strain>SMS-3-5 / SECEC</strain>
    </source>
</reference>
<accession>B1LEJ1</accession>
<dbReference type="EC" id="6.3.1.20" evidence="1"/>
<dbReference type="EMBL" id="CP000970">
    <property type="protein sequence ID" value="ACB16601.1"/>
    <property type="molecule type" value="Genomic_DNA"/>
</dbReference>
<dbReference type="RefSeq" id="WP_000105851.1">
    <property type="nucleotide sequence ID" value="NC_010498.1"/>
</dbReference>
<dbReference type="SMR" id="B1LEJ1"/>
<dbReference type="KEGG" id="ecm:EcSMS35_4935"/>
<dbReference type="HOGENOM" id="CLU_022986_0_1_6"/>
<dbReference type="UniPathway" id="UPA00537">
    <property type="reaction ID" value="UER00594"/>
</dbReference>
<dbReference type="UniPathway" id="UPA00537">
    <property type="reaction ID" value="UER00595"/>
</dbReference>
<dbReference type="Proteomes" id="UP000007011">
    <property type="component" value="Chromosome"/>
</dbReference>
<dbReference type="GO" id="GO:0005829">
    <property type="term" value="C:cytosol"/>
    <property type="evidence" value="ECO:0007669"/>
    <property type="project" value="TreeGrafter"/>
</dbReference>
<dbReference type="GO" id="GO:0005524">
    <property type="term" value="F:ATP binding"/>
    <property type="evidence" value="ECO:0007669"/>
    <property type="project" value="UniProtKB-KW"/>
</dbReference>
<dbReference type="GO" id="GO:0016979">
    <property type="term" value="F:lipoate-protein ligase activity"/>
    <property type="evidence" value="ECO:0007669"/>
    <property type="project" value="UniProtKB-UniRule"/>
</dbReference>
<dbReference type="GO" id="GO:0017118">
    <property type="term" value="F:lipoyltransferase activity"/>
    <property type="evidence" value="ECO:0007669"/>
    <property type="project" value="TreeGrafter"/>
</dbReference>
<dbReference type="GO" id="GO:0036211">
    <property type="term" value="P:protein modification process"/>
    <property type="evidence" value="ECO:0007669"/>
    <property type="project" value="InterPro"/>
</dbReference>
<dbReference type="CDD" id="cd16435">
    <property type="entry name" value="BPL_LplA_LipB"/>
    <property type="match status" value="1"/>
</dbReference>
<dbReference type="FunFam" id="3.30.390.50:FF:000002">
    <property type="entry name" value="Lipoate-protein ligase A"/>
    <property type="match status" value="1"/>
</dbReference>
<dbReference type="FunFam" id="3.30.930.10:FF:000024">
    <property type="entry name" value="Lipoate-protein ligase A"/>
    <property type="match status" value="1"/>
</dbReference>
<dbReference type="Gene3D" id="3.30.930.10">
    <property type="entry name" value="Bira Bifunctional Protein, Domain 2"/>
    <property type="match status" value="1"/>
</dbReference>
<dbReference type="Gene3D" id="3.30.390.50">
    <property type="entry name" value="CO dehydrogenase flavoprotein, C-terminal domain"/>
    <property type="match status" value="1"/>
</dbReference>
<dbReference type="HAMAP" id="MF_01602">
    <property type="entry name" value="LplA"/>
    <property type="match status" value="1"/>
</dbReference>
<dbReference type="InterPro" id="IPR045864">
    <property type="entry name" value="aa-tRNA-synth_II/BPL/LPL"/>
</dbReference>
<dbReference type="InterPro" id="IPR004143">
    <property type="entry name" value="BPL_LPL_catalytic"/>
</dbReference>
<dbReference type="InterPro" id="IPR023741">
    <property type="entry name" value="Lipoate_ligase_A"/>
</dbReference>
<dbReference type="InterPro" id="IPR019491">
    <property type="entry name" value="Lipoate_protein_ligase_C"/>
</dbReference>
<dbReference type="InterPro" id="IPR004562">
    <property type="entry name" value="LipoylTrfase_LipoateP_Ligase"/>
</dbReference>
<dbReference type="NCBIfam" id="TIGR00545">
    <property type="entry name" value="lipoyltrans"/>
    <property type="match status" value="1"/>
</dbReference>
<dbReference type="PANTHER" id="PTHR12561">
    <property type="entry name" value="LIPOATE-PROTEIN LIGASE"/>
    <property type="match status" value="1"/>
</dbReference>
<dbReference type="PANTHER" id="PTHR12561:SF3">
    <property type="entry name" value="LIPOYLTRANSFERASE 1, MITOCHONDRIAL"/>
    <property type="match status" value="1"/>
</dbReference>
<dbReference type="Pfam" id="PF10437">
    <property type="entry name" value="Lip_prot_lig_C"/>
    <property type="match status" value="1"/>
</dbReference>
<dbReference type="Pfam" id="PF21948">
    <property type="entry name" value="LplA-B_cat"/>
    <property type="match status" value="1"/>
</dbReference>
<dbReference type="SUPFAM" id="SSF55681">
    <property type="entry name" value="Class II aaRS and biotin synthetases"/>
    <property type="match status" value="1"/>
</dbReference>
<dbReference type="SUPFAM" id="SSF82649">
    <property type="entry name" value="SufE/NifU"/>
    <property type="match status" value="1"/>
</dbReference>
<dbReference type="PROSITE" id="PS51733">
    <property type="entry name" value="BPL_LPL_CATALYTIC"/>
    <property type="match status" value="1"/>
</dbReference>
<proteinExistence type="inferred from homology"/>
<name>LPLA_ECOSM</name>
<keyword id="KW-0067">ATP-binding</keyword>
<keyword id="KW-0963">Cytoplasm</keyword>
<keyword id="KW-0436">Ligase</keyword>
<keyword id="KW-0547">Nucleotide-binding</keyword>
<organism>
    <name type="scientific">Escherichia coli (strain SMS-3-5 / SECEC)</name>
    <dbReference type="NCBI Taxonomy" id="439855"/>
    <lineage>
        <taxon>Bacteria</taxon>
        <taxon>Pseudomonadati</taxon>
        <taxon>Pseudomonadota</taxon>
        <taxon>Gammaproteobacteria</taxon>
        <taxon>Enterobacterales</taxon>
        <taxon>Enterobacteriaceae</taxon>
        <taxon>Escherichia</taxon>
    </lineage>
</organism>